<accession>Q83BL6</accession>
<reference key="1">
    <citation type="journal article" date="2003" name="Proc. Natl. Acad. Sci. U.S.A.">
        <title>Complete genome sequence of the Q-fever pathogen, Coxiella burnetii.</title>
        <authorList>
            <person name="Seshadri R."/>
            <person name="Paulsen I.T."/>
            <person name="Eisen J.A."/>
            <person name="Read T.D."/>
            <person name="Nelson K.E."/>
            <person name="Nelson W.C."/>
            <person name="Ward N.L."/>
            <person name="Tettelin H."/>
            <person name="Davidsen T.M."/>
            <person name="Beanan M.J."/>
            <person name="DeBoy R.T."/>
            <person name="Daugherty S.C."/>
            <person name="Brinkac L.M."/>
            <person name="Madupu R."/>
            <person name="Dodson R.J."/>
            <person name="Khouri H.M."/>
            <person name="Lee K.H."/>
            <person name="Carty H.A."/>
            <person name="Scanlan D."/>
            <person name="Heinzen R.A."/>
            <person name="Thompson H.A."/>
            <person name="Samuel J.E."/>
            <person name="Fraser C.M."/>
            <person name="Heidelberg J.F."/>
        </authorList>
    </citation>
    <scope>NUCLEOTIDE SEQUENCE [LARGE SCALE GENOMIC DNA]</scope>
    <source>
        <strain>RSA 493 / Nine Mile phase I</strain>
    </source>
</reference>
<comment type="function">
    <text evidence="1">Catalyzes the attachment of glutamate to tRNA(Glu) in a two-step reaction: glutamate is first activated by ATP to form Glu-AMP and then transferred to the acceptor end of tRNA(Glu).</text>
</comment>
<comment type="catalytic activity">
    <reaction evidence="1">
        <text>tRNA(Glu) + L-glutamate + ATP = L-glutamyl-tRNA(Glu) + AMP + diphosphate</text>
        <dbReference type="Rhea" id="RHEA:23540"/>
        <dbReference type="Rhea" id="RHEA-COMP:9663"/>
        <dbReference type="Rhea" id="RHEA-COMP:9680"/>
        <dbReference type="ChEBI" id="CHEBI:29985"/>
        <dbReference type="ChEBI" id="CHEBI:30616"/>
        <dbReference type="ChEBI" id="CHEBI:33019"/>
        <dbReference type="ChEBI" id="CHEBI:78442"/>
        <dbReference type="ChEBI" id="CHEBI:78520"/>
        <dbReference type="ChEBI" id="CHEBI:456215"/>
        <dbReference type="EC" id="6.1.1.17"/>
    </reaction>
</comment>
<comment type="subunit">
    <text evidence="1">Monomer.</text>
</comment>
<comment type="subcellular location">
    <subcellularLocation>
        <location evidence="1">Cytoplasm</location>
    </subcellularLocation>
</comment>
<comment type="similarity">
    <text evidence="1">Belongs to the class-I aminoacyl-tRNA synthetase family. Glutamate--tRNA ligase type 1 subfamily.</text>
</comment>
<organism>
    <name type="scientific">Coxiella burnetii (strain RSA 493 / Nine Mile phase I)</name>
    <dbReference type="NCBI Taxonomy" id="227377"/>
    <lineage>
        <taxon>Bacteria</taxon>
        <taxon>Pseudomonadati</taxon>
        <taxon>Pseudomonadota</taxon>
        <taxon>Gammaproteobacteria</taxon>
        <taxon>Legionellales</taxon>
        <taxon>Coxiellaceae</taxon>
        <taxon>Coxiella</taxon>
    </lineage>
</organism>
<proteinExistence type="inferred from homology"/>
<name>SYE2_COXBU</name>
<keyword id="KW-0030">Aminoacyl-tRNA synthetase</keyword>
<keyword id="KW-0067">ATP-binding</keyword>
<keyword id="KW-0963">Cytoplasm</keyword>
<keyword id="KW-0436">Ligase</keyword>
<keyword id="KW-0547">Nucleotide-binding</keyword>
<keyword id="KW-0648">Protein biosynthesis</keyword>
<keyword id="KW-1185">Reference proteome</keyword>
<dbReference type="EC" id="6.1.1.17" evidence="1"/>
<dbReference type="EMBL" id="AE016828">
    <property type="protein sequence ID" value="AAO90985.2"/>
    <property type="molecule type" value="Genomic_DNA"/>
</dbReference>
<dbReference type="RefSeq" id="NP_820471.2">
    <property type="nucleotide sequence ID" value="NC_002971.3"/>
</dbReference>
<dbReference type="SMR" id="Q83BL6"/>
<dbReference type="STRING" id="227377.CBU_1488"/>
<dbReference type="DNASU" id="1209398"/>
<dbReference type="EnsemblBacteria" id="AAO90985">
    <property type="protein sequence ID" value="AAO90985"/>
    <property type="gene ID" value="CBU_1488"/>
</dbReference>
<dbReference type="GeneID" id="1209398"/>
<dbReference type="KEGG" id="cbu:CBU_1488"/>
<dbReference type="PATRIC" id="fig|227377.7.peg.1489"/>
<dbReference type="eggNOG" id="COG0008">
    <property type="taxonomic scope" value="Bacteria"/>
</dbReference>
<dbReference type="HOGENOM" id="CLU_015768_6_3_6"/>
<dbReference type="OrthoDB" id="9807503at2"/>
<dbReference type="Proteomes" id="UP000002671">
    <property type="component" value="Chromosome"/>
</dbReference>
<dbReference type="GO" id="GO:0005829">
    <property type="term" value="C:cytosol"/>
    <property type="evidence" value="ECO:0000318"/>
    <property type="project" value="GO_Central"/>
</dbReference>
<dbReference type="GO" id="GO:0005524">
    <property type="term" value="F:ATP binding"/>
    <property type="evidence" value="ECO:0007669"/>
    <property type="project" value="UniProtKB-UniRule"/>
</dbReference>
<dbReference type="GO" id="GO:0004818">
    <property type="term" value="F:glutamate-tRNA ligase activity"/>
    <property type="evidence" value="ECO:0000318"/>
    <property type="project" value="GO_Central"/>
</dbReference>
<dbReference type="GO" id="GO:0000049">
    <property type="term" value="F:tRNA binding"/>
    <property type="evidence" value="ECO:0007669"/>
    <property type="project" value="InterPro"/>
</dbReference>
<dbReference type="GO" id="GO:0008270">
    <property type="term" value="F:zinc ion binding"/>
    <property type="evidence" value="ECO:0007669"/>
    <property type="project" value="InterPro"/>
</dbReference>
<dbReference type="GO" id="GO:0006424">
    <property type="term" value="P:glutamyl-tRNA aminoacylation"/>
    <property type="evidence" value="ECO:0000318"/>
    <property type="project" value="GO_Central"/>
</dbReference>
<dbReference type="CDD" id="cd00808">
    <property type="entry name" value="GluRS_core"/>
    <property type="match status" value="1"/>
</dbReference>
<dbReference type="FunFam" id="3.40.50.620:FF:000007">
    <property type="entry name" value="Glutamate--tRNA ligase"/>
    <property type="match status" value="1"/>
</dbReference>
<dbReference type="Gene3D" id="1.10.10.350">
    <property type="match status" value="1"/>
</dbReference>
<dbReference type="Gene3D" id="3.40.50.620">
    <property type="entry name" value="HUPs"/>
    <property type="match status" value="1"/>
</dbReference>
<dbReference type="HAMAP" id="MF_00022">
    <property type="entry name" value="Glu_tRNA_synth_type1"/>
    <property type="match status" value="1"/>
</dbReference>
<dbReference type="InterPro" id="IPR045462">
    <property type="entry name" value="aa-tRNA-synth_I_cd-bd"/>
</dbReference>
<dbReference type="InterPro" id="IPR020751">
    <property type="entry name" value="aa-tRNA-synth_I_codon-bd_sub2"/>
</dbReference>
<dbReference type="InterPro" id="IPR001412">
    <property type="entry name" value="aa-tRNA-synth_I_CS"/>
</dbReference>
<dbReference type="InterPro" id="IPR008925">
    <property type="entry name" value="aa_tRNA-synth_I_cd-bd_sf"/>
</dbReference>
<dbReference type="InterPro" id="IPR004527">
    <property type="entry name" value="Glu-tRNA-ligase_bac/mito"/>
</dbReference>
<dbReference type="InterPro" id="IPR000924">
    <property type="entry name" value="Glu/Gln-tRNA-synth"/>
</dbReference>
<dbReference type="InterPro" id="IPR020058">
    <property type="entry name" value="Glu/Gln-tRNA-synth_Ib_cat-dom"/>
</dbReference>
<dbReference type="InterPro" id="IPR049940">
    <property type="entry name" value="GluQ/Sye"/>
</dbReference>
<dbReference type="InterPro" id="IPR033910">
    <property type="entry name" value="GluRS_core"/>
</dbReference>
<dbReference type="InterPro" id="IPR014729">
    <property type="entry name" value="Rossmann-like_a/b/a_fold"/>
</dbReference>
<dbReference type="NCBIfam" id="TIGR00464">
    <property type="entry name" value="gltX_bact"/>
    <property type="match status" value="1"/>
</dbReference>
<dbReference type="PANTHER" id="PTHR43311">
    <property type="entry name" value="GLUTAMATE--TRNA LIGASE"/>
    <property type="match status" value="1"/>
</dbReference>
<dbReference type="PANTHER" id="PTHR43311:SF2">
    <property type="entry name" value="GLUTAMATE--TRNA LIGASE, MITOCHONDRIAL-RELATED"/>
    <property type="match status" value="1"/>
</dbReference>
<dbReference type="Pfam" id="PF19269">
    <property type="entry name" value="Anticodon_2"/>
    <property type="match status" value="1"/>
</dbReference>
<dbReference type="Pfam" id="PF00749">
    <property type="entry name" value="tRNA-synt_1c"/>
    <property type="match status" value="1"/>
</dbReference>
<dbReference type="PRINTS" id="PR00987">
    <property type="entry name" value="TRNASYNTHGLU"/>
</dbReference>
<dbReference type="SUPFAM" id="SSF48163">
    <property type="entry name" value="An anticodon-binding domain of class I aminoacyl-tRNA synthetases"/>
    <property type="match status" value="1"/>
</dbReference>
<dbReference type="SUPFAM" id="SSF52374">
    <property type="entry name" value="Nucleotidylyl transferase"/>
    <property type="match status" value="1"/>
</dbReference>
<dbReference type="PROSITE" id="PS00178">
    <property type="entry name" value="AA_TRNA_LIGASE_I"/>
    <property type="match status" value="1"/>
</dbReference>
<sequence>MMKSRFCPSPTGLMHLGNARTALFNYLFAKSKDGIFLLRIEDTDVERSKETFDLGLQEDLRWLNLEWQEGPGADEGNGPYHQSKRQAIYDDYYQRLEEADQAYPCFCSEEQLRLSRKIQRSAGKPPRYAGTCRSLSAAEIEKKKAEGLQPALRFRVPDDEVVVFADLVRGEQRFQTNDIGDFIIRRANGTSPFMFCNAIDDALMGVSHVLRGEDHLTNTPRQLLILQALELPVPTYAHIALIVGPDGSPLSKRHGSRGIKELRDNGYLPLALTNYLARLGHYYASDELLSLAELAKGFNVESLSKSPAKFNAQQLDYWQKQTVNQLPNDDFWEWAGSELQSQIPTDKDDLFLTTVKPNVSFPRDVAYWVNVCFGKTLNLETAQSELLRATGNRYFEEAFEAFKKFGKDLNSVVSHLKEKLNLKGKPLYQPLRIALTGAEHGPELAKLILIMDYETIQNRLQEACQ</sequence>
<evidence type="ECO:0000255" key="1">
    <source>
        <dbReference type="HAMAP-Rule" id="MF_00022"/>
    </source>
</evidence>
<feature type="chain" id="PRO_0000119551" description="Glutamate--tRNA ligase 2">
    <location>
        <begin position="1"/>
        <end position="465"/>
    </location>
</feature>
<feature type="short sequence motif" description="'HIGH' region" evidence="1">
    <location>
        <begin position="8"/>
        <end position="18"/>
    </location>
</feature>
<feature type="short sequence motif" description="'KMSKS' region" evidence="1">
    <location>
        <begin position="249"/>
        <end position="253"/>
    </location>
</feature>
<feature type="binding site" evidence="1">
    <location>
        <position position="252"/>
    </location>
    <ligand>
        <name>ATP</name>
        <dbReference type="ChEBI" id="CHEBI:30616"/>
    </ligand>
</feature>
<gene>
    <name evidence="1" type="primary">gltX2</name>
    <name type="synonym">gltX-2</name>
    <name type="ordered locus">CBU_1488</name>
</gene>
<protein>
    <recommendedName>
        <fullName evidence="1">Glutamate--tRNA ligase 2</fullName>
        <ecNumber evidence="1">6.1.1.17</ecNumber>
    </recommendedName>
    <alternativeName>
        <fullName evidence="1">Glutamyl-tRNA synthetase 2</fullName>
        <shortName evidence="1">GluRS 2</shortName>
    </alternativeName>
</protein>